<name>MATK_TRIGC</name>
<reference key="1">
    <citation type="book" date="2003" name="Advances in legume systematics - part 10">
        <title>Phylogenetic analyses of tribes Trifolieae and Vicieae based on sequences of the plastid gene matK (Papilionoideae: Leguminosae).</title>
        <editorList>
            <person name="Klitgaard B.B."/>
            <person name="Bruneau A."/>
        </editorList>
        <authorList>
            <person name="Steele K.P."/>
            <person name="Wojciechowski M.F."/>
        </authorList>
    </citation>
    <scope>NUCLEOTIDE SEQUENCE [GENOMIC DNA]</scope>
</reference>
<geneLocation type="chloroplast"/>
<accession>Q8MCN2</accession>
<comment type="function">
    <text evidence="1">Usually encoded in the trnK tRNA gene intron. Probably assists in splicing its own and other chloroplast group II introns.</text>
</comment>
<comment type="subcellular location">
    <subcellularLocation>
        <location>Plastid</location>
        <location>Chloroplast</location>
    </subcellularLocation>
</comment>
<comment type="similarity">
    <text evidence="1">Belongs to the intron maturase 2 family. MatK subfamily.</text>
</comment>
<proteinExistence type="inferred from homology"/>
<evidence type="ECO:0000255" key="1">
    <source>
        <dbReference type="HAMAP-Rule" id="MF_01390"/>
    </source>
</evidence>
<protein>
    <recommendedName>
        <fullName evidence="1">Maturase K</fullName>
    </recommendedName>
    <alternativeName>
        <fullName evidence="1">Intron maturase</fullName>
    </alternativeName>
</protein>
<dbReference type="EMBL" id="AF522123">
    <property type="protein sequence ID" value="AAM82115.1"/>
    <property type="molecule type" value="Genomic_DNA"/>
</dbReference>
<dbReference type="GO" id="GO:0009507">
    <property type="term" value="C:chloroplast"/>
    <property type="evidence" value="ECO:0007669"/>
    <property type="project" value="UniProtKB-SubCell"/>
</dbReference>
<dbReference type="GO" id="GO:0003723">
    <property type="term" value="F:RNA binding"/>
    <property type="evidence" value="ECO:0007669"/>
    <property type="project" value="UniProtKB-KW"/>
</dbReference>
<dbReference type="GO" id="GO:0006397">
    <property type="term" value="P:mRNA processing"/>
    <property type="evidence" value="ECO:0007669"/>
    <property type="project" value="UniProtKB-KW"/>
</dbReference>
<dbReference type="GO" id="GO:0008380">
    <property type="term" value="P:RNA splicing"/>
    <property type="evidence" value="ECO:0007669"/>
    <property type="project" value="UniProtKB-UniRule"/>
</dbReference>
<dbReference type="GO" id="GO:0008033">
    <property type="term" value="P:tRNA processing"/>
    <property type="evidence" value="ECO:0007669"/>
    <property type="project" value="UniProtKB-KW"/>
</dbReference>
<dbReference type="HAMAP" id="MF_01390">
    <property type="entry name" value="MatK"/>
    <property type="match status" value="1"/>
</dbReference>
<dbReference type="InterPro" id="IPR024937">
    <property type="entry name" value="Domain_X"/>
</dbReference>
<dbReference type="InterPro" id="IPR002866">
    <property type="entry name" value="Maturase_MatK"/>
</dbReference>
<dbReference type="InterPro" id="IPR024942">
    <property type="entry name" value="Maturase_MatK_N"/>
</dbReference>
<dbReference type="PANTHER" id="PTHR34811">
    <property type="entry name" value="MATURASE K"/>
    <property type="match status" value="1"/>
</dbReference>
<dbReference type="PANTHER" id="PTHR34811:SF1">
    <property type="entry name" value="MATURASE K"/>
    <property type="match status" value="1"/>
</dbReference>
<dbReference type="Pfam" id="PF01348">
    <property type="entry name" value="Intron_maturas2"/>
    <property type="match status" value="1"/>
</dbReference>
<dbReference type="Pfam" id="PF01824">
    <property type="entry name" value="MatK_N"/>
    <property type="match status" value="1"/>
</dbReference>
<sequence>MKEYRVYLERARSRQQDFLYPLIFREYIYGLAYSHNFNRSIFVENGGYDNKYSLLNVKRLITRMYQQNHLIISANDSNKNPFLGYNKNFYSQIISEGFAIVVEIPFFLQLSSSLEEAEIIKSYKNLRSIHSVFPFLEDKFTYLNYVSDIRIPYPIHLEILVQILRYWVKDVPFFHLLRLFLYHFCNWNCFIPTKKSISTFSKSNPRLFLFLYNFYVCEYESIFLFLRNKSYHLRLKSFSVFFERIFFYAKREHLVEVFSKDFSYTLPFFKDPNIHYVRYQGKCILASKNVPFLMNKWKYYFIHLWQCFFDVWSQPRTININQLSEHSFQLLGYFSNVRLNRSVVRSQMLQNTFLIEIVSKKLDIIVPIIPLIRSLAKAKFCNVLGHPISKPVWADSSDFDIIERFLRICRNLSHYYNGSSKKKSLYRIKYILRLSCIKTLACKHKSTVRAFLKRSGSEELLEEFFTEEEEILSLIFPRDSFTLHRFHRNRIWYLDILFNNDLVNDE</sequence>
<gene>
    <name evidence="1" type="primary">matK</name>
</gene>
<organism>
    <name type="scientific">Trifolium gracilentum</name>
    <name type="common">Pinpoint clover</name>
    <dbReference type="NCBI Taxonomy" id="74515"/>
    <lineage>
        <taxon>Eukaryota</taxon>
        <taxon>Viridiplantae</taxon>
        <taxon>Streptophyta</taxon>
        <taxon>Embryophyta</taxon>
        <taxon>Tracheophyta</taxon>
        <taxon>Spermatophyta</taxon>
        <taxon>Magnoliopsida</taxon>
        <taxon>eudicotyledons</taxon>
        <taxon>Gunneridae</taxon>
        <taxon>Pentapetalae</taxon>
        <taxon>rosids</taxon>
        <taxon>fabids</taxon>
        <taxon>Fabales</taxon>
        <taxon>Fabaceae</taxon>
        <taxon>Papilionoideae</taxon>
        <taxon>50 kb inversion clade</taxon>
        <taxon>NPAAA clade</taxon>
        <taxon>Hologalegina</taxon>
        <taxon>IRL clade</taxon>
        <taxon>Trifolieae</taxon>
        <taxon>Trifolium</taxon>
    </lineage>
</organism>
<feature type="chain" id="PRO_0000143745" description="Maturase K">
    <location>
        <begin position="1"/>
        <end position="506"/>
    </location>
</feature>
<keyword id="KW-0150">Chloroplast</keyword>
<keyword id="KW-0507">mRNA processing</keyword>
<keyword id="KW-0934">Plastid</keyword>
<keyword id="KW-0694">RNA-binding</keyword>
<keyword id="KW-0819">tRNA processing</keyword>